<dbReference type="EMBL" id="CP000075">
    <property type="protein sequence ID" value="AAY40153.1"/>
    <property type="molecule type" value="Genomic_DNA"/>
</dbReference>
<dbReference type="RefSeq" id="WP_002555987.1">
    <property type="nucleotide sequence ID" value="NC_007005.1"/>
</dbReference>
<dbReference type="RefSeq" id="YP_238191.1">
    <property type="nucleotide sequence ID" value="NC_007005.1"/>
</dbReference>
<dbReference type="SMR" id="Q4ZL19"/>
<dbReference type="STRING" id="205918.Psyr_5126"/>
<dbReference type="GeneID" id="97918854"/>
<dbReference type="KEGG" id="psb:Psyr_5126"/>
<dbReference type="PATRIC" id="fig|205918.7.peg.5287"/>
<dbReference type="eggNOG" id="ENOG5032S3K">
    <property type="taxonomic scope" value="Bacteria"/>
</dbReference>
<dbReference type="HOGENOM" id="CLU_148047_1_0_6"/>
<dbReference type="OrthoDB" id="9811659at2"/>
<dbReference type="PRO" id="PR:Q4ZL19"/>
<dbReference type="Proteomes" id="UP000000426">
    <property type="component" value="Chromosome"/>
</dbReference>
<dbReference type="GO" id="GO:0005886">
    <property type="term" value="C:plasma membrane"/>
    <property type="evidence" value="ECO:0007669"/>
    <property type="project" value="UniProtKB-SubCell"/>
</dbReference>
<dbReference type="GO" id="GO:0045259">
    <property type="term" value="C:proton-transporting ATP synthase complex"/>
    <property type="evidence" value="ECO:0007669"/>
    <property type="project" value="UniProtKB-KW"/>
</dbReference>
<dbReference type="GO" id="GO:0033177">
    <property type="term" value="C:proton-transporting two-sector ATPase complex, proton-transporting domain"/>
    <property type="evidence" value="ECO:0007669"/>
    <property type="project" value="InterPro"/>
</dbReference>
<dbReference type="GO" id="GO:0008289">
    <property type="term" value="F:lipid binding"/>
    <property type="evidence" value="ECO:0007669"/>
    <property type="project" value="UniProtKB-KW"/>
</dbReference>
<dbReference type="GO" id="GO:0046933">
    <property type="term" value="F:proton-transporting ATP synthase activity, rotational mechanism"/>
    <property type="evidence" value="ECO:0007669"/>
    <property type="project" value="UniProtKB-UniRule"/>
</dbReference>
<dbReference type="CDD" id="cd18185">
    <property type="entry name" value="ATP-synt_Fo_c_ATPE"/>
    <property type="match status" value="1"/>
</dbReference>
<dbReference type="FunFam" id="1.20.20.10:FF:000002">
    <property type="entry name" value="ATP synthase subunit c"/>
    <property type="match status" value="1"/>
</dbReference>
<dbReference type="Gene3D" id="1.20.20.10">
    <property type="entry name" value="F1F0 ATP synthase subunit C"/>
    <property type="match status" value="1"/>
</dbReference>
<dbReference type="HAMAP" id="MF_01396">
    <property type="entry name" value="ATP_synth_c_bact"/>
    <property type="match status" value="1"/>
</dbReference>
<dbReference type="InterPro" id="IPR005953">
    <property type="entry name" value="ATP_synth_csu_bac/chlpt"/>
</dbReference>
<dbReference type="InterPro" id="IPR000454">
    <property type="entry name" value="ATP_synth_F0_csu"/>
</dbReference>
<dbReference type="InterPro" id="IPR020537">
    <property type="entry name" value="ATP_synth_F0_csu_DDCD_BS"/>
</dbReference>
<dbReference type="InterPro" id="IPR038662">
    <property type="entry name" value="ATP_synth_F0_csu_sf"/>
</dbReference>
<dbReference type="InterPro" id="IPR002379">
    <property type="entry name" value="ATPase_proteolipid_c-like_dom"/>
</dbReference>
<dbReference type="InterPro" id="IPR035921">
    <property type="entry name" value="F/V-ATP_Csub_sf"/>
</dbReference>
<dbReference type="NCBIfam" id="TIGR01260">
    <property type="entry name" value="ATP_synt_c"/>
    <property type="match status" value="1"/>
</dbReference>
<dbReference type="NCBIfam" id="NF005363">
    <property type="entry name" value="PRK06876.1"/>
    <property type="match status" value="1"/>
</dbReference>
<dbReference type="Pfam" id="PF00137">
    <property type="entry name" value="ATP-synt_C"/>
    <property type="match status" value="1"/>
</dbReference>
<dbReference type="PRINTS" id="PR00124">
    <property type="entry name" value="ATPASEC"/>
</dbReference>
<dbReference type="SUPFAM" id="SSF81333">
    <property type="entry name" value="F1F0 ATP synthase subunit C"/>
    <property type="match status" value="1"/>
</dbReference>
<dbReference type="PROSITE" id="PS00605">
    <property type="entry name" value="ATPASE_C"/>
    <property type="match status" value="1"/>
</dbReference>
<protein>
    <recommendedName>
        <fullName evidence="1">ATP synthase subunit c</fullName>
    </recommendedName>
    <alternativeName>
        <fullName evidence="1">ATP synthase F(0) sector subunit c</fullName>
    </alternativeName>
    <alternativeName>
        <fullName evidence="1">F-type ATPase subunit c</fullName>
        <shortName evidence="1">F-ATPase subunit c</shortName>
    </alternativeName>
    <alternativeName>
        <fullName evidence="1">Lipid-binding protein</fullName>
    </alternativeName>
</protein>
<organism>
    <name type="scientific">Pseudomonas syringae pv. syringae (strain B728a)</name>
    <dbReference type="NCBI Taxonomy" id="205918"/>
    <lineage>
        <taxon>Bacteria</taxon>
        <taxon>Pseudomonadati</taxon>
        <taxon>Pseudomonadota</taxon>
        <taxon>Gammaproteobacteria</taxon>
        <taxon>Pseudomonadales</taxon>
        <taxon>Pseudomonadaceae</taxon>
        <taxon>Pseudomonas</taxon>
        <taxon>Pseudomonas syringae</taxon>
    </lineage>
</organism>
<accession>Q4ZL19</accession>
<feature type="chain" id="PRO_1000184447" description="ATP synthase subunit c">
    <location>
        <begin position="1"/>
        <end position="85"/>
    </location>
</feature>
<feature type="transmembrane region" description="Helical" evidence="1">
    <location>
        <begin position="10"/>
        <end position="30"/>
    </location>
</feature>
<feature type="transmembrane region" description="Helical" evidence="1">
    <location>
        <begin position="53"/>
        <end position="73"/>
    </location>
</feature>
<feature type="site" description="Reversibly protonated during proton transport" evidence="1">
    <location>
        <position position="60"/>
    </location>
</feature>
<evidence type="ECO:0000255" key="1">
    <source>
        <dbReference type="HAMAP-Rule" id="MF_01396"/>
    </source>
</evidence>
<comment type="function">
    <text evidence="1">F(1)F(0) ATP synthase produces ATP from ADP in the presence of a proton or sodium gradient. F-type ATPases consist of two structural domains, F(1) containing the extramembraneous catalytic core and F(0) containing the membrane proton channel, linked together by a central stalk and a peripheral stalk. During catalysis, ATP synthesis in the catalytic domain of F(1) is coupled via a rotary mechanism of the central stalk subunits to proton translocation.</text>
</comment>
<comment type="function">
    <text evidence="1">Key component of the F(0) channel; it plays a direct role in translocation across the membrane. A homomeric c-ring of between 10-14 subunits forms the central stalk rotor element with the F(1) delta and epsilon subunits.</text>
</comment>
<comment type="subunit">
    <text evidence="1">F-type ATPases have 2 components, F(1) - the catalytic core - and F(0) - the membrane proton channel. F(1) has five subunits: alpha(3), beta(3), gamma(1), delta(1), epsilon(1). F(0) has three main subunits: a(1), b(2) and c(10-14). The alpha and beta chains form an alternating ring which encloses part of the gamma chain. F(1) is attached to F(0) by a central stalk formed by the gamma and epsilon chains, while a peripheral stalk is formed by the delta and b chains.</text>
</comment>
<comment type="subcellular location">
    <subcellularLocation>
        <location evidence="1">Cell inner membrane</location>
        <topology evidence="1">Multi-pass membrane protein</topology>
    </subcellularLocation>
</comment>
<comment type="similarity">
    <text evidence="1">Belongs to the ATPase C chain family.</text>
</comment>
<proteinExistence type="inferred from homology"/>
<reference key="1">
    <citation type="journal article" date="2005" name="Proc. Natl. Acad. Sci. U.S.A.">
        <title>Comparison of the complete genome sequences of Pseudomonas syringae pv. syringae B728a and pv. tomato DC3000.</title>
        <authorList>
            <person name="Feil H."/>
            <person name="Feil W.S."/>
            <person name="Chain P."/>
            <person name="Larimer F."/>
            <person name="Dibartolo G."/>
            <person name="Copeland A."/>
            <person name="Lykidis A."/>
            <person name="Trong S."/>
            <person name="Nolan M."/>
            <person name="Goltsman E."/>
            <person name="Thiel J."/>
            <person name="Malfatti S."/>
            <person name="Loper J.E."/>
            <person name="Lapidus A."/>
            <person name="Detter J.C."/>
            <person name="Land M."/>
            <person name="Richardson P.M."/>
            <person name="Kyrpides N.C."/>
            <person name="Ivanova N."/>
            <person name="Lindow S.E."/>
        </authorList>
    </citation>
    <scope>NUCLEOTIDE SEQUENCE [LARGE SCALE GENOMIC DNA]</scope>
    <source>
        <strain>B728a</strain>
    </source>
</reference>
<gene>
    <name evidence="1" type="primary">atpE</name>
    <name type="ordered locus">Psyr_5126</name>
</gene>
<sequence length="85" mass="8608">METVVGLTAIAVALLIGLGALGTAIGFGLLGGKFLEGAARQPEMVPMLQVKMFIVAGLLDAVTMIGVGIALFFTFANPFVGQLAG</sequence>
<keyword id="KW-0066">ATP synthesis</keyword>
<keyword id="KW-0997">Cell inner membrane</keyword>
<keyword id="KW-1003">Cell membrane</keyword>
<keyword id="KW-0138">CF(0)</keyword>
<keyword id="KW-0375">Hydrogen ion transport</keyword>
<keyword id="KW-0406">Ion transport</keyword>
<keyword id="KW-0446">Lipid-binding</keyword>
<keyword id="KW-0472">Membrane</keyword>
<keyword id="KW-0812">Transmembrane</keyword>
<keyword id="KW-1133">Transmembrane helix</keyword>
<keyword id="KW-0813">Transport</keyword>
<name>ATPL_PSEU2</name>